<gene>
    <name type="primary">TNNI3</name>
</gene>
<organism>
    <name type="scientific">Equus caballus</name>
    <name type="common">Horse</name>
    <dbReference type="NCBI Taxonomy" id="9796"/>
    <lineage>
        <taxon>Eukaryota</taxon>
        <taxon>Metazoa</taxon>
        <taxon>Chordata</taxon>
        <taxon>Craniata</taxon>
        <taxon>Vertebrata</taxon>
        <taxon>Euteleostomi</taxon>
        <taxon>Mammalia</taxon>
        <taxon>Eutheria</taxon>
        <taxon>Laurasiatheria</taxon>
        <taxon>Perissodactyla</taxon>
        <taxon>Equidae</taxon>
        <taxon>Equus</taxon>
    </lineage>
</organism>
<dbReference type="EMBL" id="AY819020">
    <property type="protein sequence ID" value="AAV68047.1"/>
    <property type="molecule type" value="mRNA"/>
</dbReference>
<dbReference type="RefSeq" id="NP_001075373.1">
    <property type="nucleotide sequence ID" value="NM_001081904.1"/>
</dbReference>
<dbReference type="SMR" id="Q5PYI0"/>
<dbReference type="FunCoup" id="Q5PYI0">
    <property type="interactions" value="101"/>
</dbReference>
<dbReference type="STRING" id="9796.ENSECAP00000045110"/>
<dbReference type="PaxDb" id="9796-ENSECAP00000045110"/>
<dbReference type="GeneID" id="100034065"/>
<dbReference type="KEGG" id="ecb:100034065"/>
<dbReference type="CTD" id="7137"/>
<dbReference type="InParanoid" id="Q5PYI0"/>
<dbReference type="OrthoDB" id="371899at2759"/>
<dbReference type="Proteomes" id="UP000002281">
    <property type="component" value="Unplaced"/>
</dbReference>
<dbReference type="GO" id="GO:0005861">
    <property type="term" value="C:troponin complex"/>
    <property type="evidence" value="ECO:0000318"/>
    <property type="project" value="GO_Central"/>
</dbReference>
<dbReference type="GO" id="GO:0003779">
    <property type="term" value="F:actin binding"/>
    <property type="evidence" value="ECO:0007669"/>
    <property type="project" value="UniProtKB-KW"/>
</dbReference>
<dbReference type="GO" id="GO:0060048">
    <property type="term" value="P:cardiac muscle contraction"/>
    <property type="evidence" value="ECO:0000318"/>
    <property type="project" value="GO_Central"/>
</dbReference>
<dbReference type="GO" id="GO:0003009">
    <property type="term" value="P:skeletal muscle contraction"/>
    <property type="evidence" value="ECO:0000318"/>
    <property type="project" value="GO_Central"/>
</dbReference>
<dbReference type="FunFam" id="1.20.5.350:FF:000002">
    <property type="entry name" value="troponin I, fast skeletal muscle"/>
    <property type="match status" value="1"/>
</dbReference>
<dbReference type="Gene3D" id="1.20.5.350">
    <property type="match status" value="1"/>
</dbReference>
<dbReference type="Gene3D" id="6.10.250.180">
    <property type="match status" value="1"/>
</dbReference>
<dbReference type="InterPro" id="IPR001978">
    <property type="entry name" value="Troponin"/>
</dbReference>
<dbReference type="InterPro" id="IPR021666">
    <property type="entry name" value="Troponin-I_N"/>
</dbReference>
<dbReference type="InterPro" id="IPR050875">
    <property type="entry name" value="Troponin_I"/>
</dbReference>
<dbReference type="InterPro" id="IPR038077">
    <property type="entry name" value="Troponin_sf"/>
</dbReference>
<dbReference type="PANTHER" id="PTHR13738">
    <property type="entry name" value="TROPONIN I"/>
    <property type="match status" value="1"/>
</dbReference>
<dbReference type="PANTHER" id="PTHR13738:SF2">
    <property type="entry name" value="TROPONIN I, CARDIAC MUSCLE"/>
    <property type="match status" value="1"/>
</dbReference>
<dbReference type="Pfam" id="PF00992">
    <property type="entry name" value="Troponin"/>
    <property type="match status" value="1"/>
</dbReference>
<dbReference type="Pfam" id="PF11636">
    <property type="entry name" value="Troponin-I_N"/>
    <property type="match status" value="1"/>
</dbReference>
<dbReference type="SUPFAM" id="SSF90250">
    <property type="entry name" value="Troponin coil-coiled subunits"/>
    <property type="match status" value="1"/>
</dbReference>
<accession>Q5PYI0</accession>
<reference key="1">
    <citation type="journal article" date="2005" name="J. Vet. Diagn. Invest.">
        <title>Cloning and sequencing of equine cardiac troponin I and confirmation of its usefulness as a target analyte for commercial troponin I analyzers.</title>
        <authorList>
            <person name="Rishniw M."/>
            <person name="Simpson K.W."/>
        </authorList>
    </citation>
    <scope>NUCLEOTIDE SEQUENCE [MRNA]</scope>
    <source>
        <tissue>Heart</tissue>
    </source>
</reference>
<feature type="initiator methionine" description="Removed" evidence="3">
    <location>
        <position position="1"/>
    </location>
</feature>
<feature type="chain" id="PRO_0000186152" description="Troponin I, cardiac muscle">
    <location>
        <begin position="2"/>
        <end position="205"/>
    </location>
</feature>
<feature type="region of interest" description="Disordered" evidence="6">
    <location>
        <begin position="1"/>
        <end position="38"/>
    </location>
</feature>
<feature type="region of interest" description="Involved in binding TNC">
    <location>
        <begin position="27"/>
        <end position="74"/>
    </location>
</feature>
<feature type="region of interest" description="Involved in binding TNC and actin">
    <location>
        <begin position="124"/>
        <end position="145"/>
    </location>
</feature>
<feature type="site" description="Involved in TNI-TNT interactions" evidence="1">
    <location>
        <position position="75"/>
    </location>
</feature>
<feature type="site" description="Involved in TNI-TNT interactions" evidence="1">
    <location>
        <position position="92"/>
    </location>
</feature>
<feature type="modified residue" description="N-acetylalanine" evidence="3">
    <location>
        <position position="2"/>
    </location>
</feature>
<feature type="modified residue" description="Phosphoserine" evidence="4">
    <location>
        <position position="5"/>
    </location>
</feature>
<feature type="modified residue" description="Phosphoserine; by PKA and PKD/PRKD1" evidence="2">
    <location>
        <position position="17"/>
    </location>
</feature>
<feature type="modified residue" description="Phosphoserine; by PKA and PKD/PRKD1" evidence="4">
    <location>
        <position position="18"/>
    </location>
</feature>
<feature type="modified residue" description="Phosphotyrosine" evidence="4">
    <location>
        <position position="21"/>
    </location>
</feature>
<feature type="modified residue" description="Phosphothreonine; by STK4/MST1" evidence="4">
    <location>
        <position position="26"/>
    </location>
</feature>
<feature type="modified residue" description="Phosphoserine; by PKC/PRKCE" evidence="5">
    <location>
        <position position="37"/>
    </location>
</feature>
<feature type="modified residue" description="Phosphoserine; by PKC/PRKCE" evidence="5">
    <location>
        <position position="39"/>
    </location>
</feature>
<feature type="modified residue" description="Phosphothreonine; by STK4/MST1" evidence="4">
    <location>
        <position position="46"/>
    </location>
</feature>
<feature type="modified residue" description="Phosphoserine" evidence="4">
    <location>
        <position position="72"/>
    </location>
</feature>
<feature type="modified residue" description="Phosphothreonine" evidence="4">
    <location>
        <position position="73"/>
    </location>
</feature>
<feature type="modified residue" description="Phosphothreonine; by STK4/MST1" evidence="4">
    <location>
        <position position="138"/>
    </location>
</feature>
<feature type="modified residue" description="Phosphoserine; by PAK3" evidence="4">
    <location>
        <position position="145"/>
    </location>
</feature>
<feature type="modified residue" description="Phosphothreonine" evidence="4">
    <location>
        <position position="176"/>
    </location>
</feature>
<feature type="modified residue" description="Phosphoserine" evidence="4">
    <location>
        <position position="194"/>
    </location>
</feature>
<proteinExistence type="evidence at transcript level"/>
<sequence length="205" mass="23483">MADQSGNAAPPPVRRRSSANYRAYATEPHAKKKSKISASRKLQLKTLMLQIAKQELEREAVERRGEKGRALSTRCQPLELAGLGFEELQDLCRQLHARVDKVDEERYDVEAKVTKNITEIADLNQKIFDLRGKFKRPTLRRVRISADAMMQALLGTRAKETLDLRAHLKQVKKEDTEKENREVGDWRKNIDALSGMEGRKKKFEG</sequence>
<keyword id="KW-0007">Acetylation</keyword>
<keyword id="KW-0009">Actin-binding</keyword>
<keyword id="KW-0514">Muscle protein</keyword>
<keyword id="KW-0597">Phosphoprotein</keyword>
<keyword id="KW-1185">Reference proteome</keyword>
<evidence type="ECO:0000250" key="1"/>
<evidence type="ECO:0000250" key="2">
    <source>
        <dbReference type="UniProtKB" id="P02646"/>
    </source>
</evidence>
<evidence type="ECO:0000250" key="3">
    <source>
        <dbReference type="UniProtKB" id="P08057"/>
    </source>
</evidence>
<evidence type="ECO:0000250" key="4">
    <source>
        <dbReference type="UniProtKB" id="P19429"/>
    </source>
</evidence>
<evidence type="ECO:0000250" key="5">
    <source>
        <dbReference type="UniProtKB" id="P48787"/>
    </source>
</evidence>
<evidence type="ECO:0000256" key="6">
    <source>
        <dbReference type="SAM" id="MobiDB-lite"/>
    </source>
</evidence>
<evidence type="ECO:0000305" key="7"/>
<name>TNNI3_HORSE</name>
<protein>
    <recommendedName>
        <fullName>Troponin I, cardiac muscle</fullName>
    </recommendedName>
    <alternativeName>
        <fullName>Cardiac troponin I</fullName>
    </alternativeName>
</protein>
<comment type="function">
    <text evidence="1">Troponin I is the inhibitory subunit of troponin, the thin filament regulatory complex which confers calcium-sensitivity to striated muscle actomyosin ATPase activity.</text>
</comment>
<comment type="subunit">
    <text evidence="1">Binds to actin and tropomyosin. Interacts with TRIM63. Interacts with STK4/MST1 (By similarity).</text>
</comment>
<comment type="PTM">
    <text evidence="1">Phosphorylated at Ser-17 and Ser-18 by PRKD1; phosphorylation reduces myofilament calcium sensitivity. Phosphorylated preferentially at Thr-26. Phosphorylation by STK4/MST1 alters its binding affinity to TNNC1 (cardiac Tn-C) and TNNT2 (cardiac Tn-T). Phosphorylated at Ser-37 and Ser-39 by PRKCE; phosphorylation increases myocardium contractile dysfunction (By similarity).</text>
</comment>
<comment type="similarity">
    <text evidence="7">Belongs to the troponin I family.</text>
</comment>